<organism>
    <name type="scientific">Deinagkistrodon acutus</name>
    <name type="common">Hundred-pace snake</name>
    <name type="synonym">Agkistrodon acutus</name>
    <dbReference type="NCBI Taxonomy" id="36307"/>
    <lineage>
        <taxon>Eukaryota</taxon>
        <taxon>Metazoa</taxon>
        <taxon>Chordata</taxon>
        <taxon>Craniata</taxon>
        <taxon>Vertebrata</taxon>
        <taxon>Euteleostomi</taxon>
        <taxon>Lepidosauria</taxon>
        <taxon>Squamata</taxon>
        <taxon>Bifurcata</taxon>
        <taxon>Unidentata</taxon>
        <taxon>Episquamata</taxon>
        <taxon>Toxicofera</taxon>
        <taxon>Serpentes</taxon>
        <taxon>Colubroidea</taxon>
        <taxon>Viperidae</taxon>
        <taxon>Crotalinae</taxon>
        <taxon>Deinagkistrodon</taxon>
    </lineage>
</organism>
<name>SLAB_DEIAC</name>
<sequence>MGRFIFVSFGLLVLFLSLSGTAADCPSDWSSYEGHCYKPFNEPKNWADAENFCTQQHTGSHLVSFQSTEEADFVVKLAFQTFDYGIFWMGLSKIWNQCNWQWSNAAMLKYTDWAEESYCVYFKSTNNKWRSITCRMIANFVCEFQA</sequence>
<reference key="1">
    <citation type="journal article" date="2002" name="Toxicon">
        <title>Characterization, primary structure and molecular evolution of anticoagulant protein from Agkistrodon actus venom.</title>
        <authorList>
            <person name="Tani A."/>
            <person name="Ogawa T."/>
            <person name="Nose T."/>
            <person name="Nikandrov N.N."/>
            <person name="Deshimaru M."/>
            <person name="Chijiwa T."/>
            <person name="Chang C.C."/>
            <person name="Fukumaki Y."/>
            <person name="Ohno M."/>
        </authorList>
    </citation>
    <scope>NUCLEOTIDE SEQUENCE [MRNA]</scope>
    <source>
        <tissue>Venom gland</tissue>
    </source>
</reference>
<reference key="2">
    <citation type="submission" date="2002-03" db="EMBL/GenBank/DDBJ databases">
        <title>B chain of ACF 1/2 from Deinagkistrodon acutus.</title>
        <authorList>
            <person name="Yu H."/>
            <person name="Xiang K."/>
            <person name="Wang Y."/>
            <person name="Liu J."/>
        </authorList>
    </citation>
    <scope>NUCLEOTIDE SEQUENCE [MRNA]</scope>
    <source>
        <tissue>Venom gland</tissue>
    </source>
</reference>
<reference key="3">
    <citation type="submission" date="2003-05" db="EMBL/GenBank/DDBJ databases">
        <title>Genomic DNA sequence of b chain of Agkisasin, a C-type lectin-like protein from Agkistrodon acutus venom, and its evolutionary significance.</title>
        <authorList>
            <person name="Zha X.D."/>
            <person name="Ren B."/>
            <person name="Liu J."/>
            <person name="Xu K.S."/>
        </authorList>
    </citation>
    <scope>NUCLEOTIDE SEQUENCE [GENOMIC DNA / MRNA] OF 23-146</scope>
    <source>
        <tissue>Venom gland</tissue>
    </source>
</reference>
<reference key="4">
    <citation type="journal article" date="2001" name="Proc. Natl. Acad. Sci. U.S.A.">
        <title>Crystal structure of an anticoagulant protein in complex with the Gla domain of factor X.</title>
        <authorList>
            <person name="Mizuno H."/>
            <person name="Fujimoto Z."/>
            <person name="Atoda H."/>
            <person name="Morita T."/>
        </authorList>
    </citation>
    <scope>X-RAY CRYSTALLOGRAPHY (2.3 ANGSTROMS) OF 24-152 IN DIMER WITH AGKISACUTACIN-A</scope>
    <scope>METAL-BINDING SITES</scope>
    <scope>DISULFIDE BONDS</scope>
    <source>
        <tissue>Venom</tissue>
    </source>
</reference>
<reference key="5">
    <citation type="submission" date="2004-11" db="PDB data bank">
        <title>Characterizations and crystal structures of two snake venom proteins with the activity of binding coagulation factor X from Agkistrodon acutus.</title>
        <authorList>
            <person name="Zhu Z."/>
            <person name="Liu S."/>
            <person name="Mo X."/>
            <person name="Yu X."/>
            <person name="Liang Z."/>
            <person name="Zang J."/>
            <person name="Zhao W."/>
            <person name="Teng M."/>
            <person name="Niu L."/>
        </authorList>
    </citation>
    <scope>X-RAY CRYSTALLOGRAPHY (2.01 ANGSTROMS) OF 24-152 IN DIMER WITH AGKISACUTACIN-A AND AAACP-A</scope>
    <scope>METAL-BINDING SITES</scope>
    <scope>DISULFIDE BONDS</scope>
    <source>
        <tissue>Venom</tissue>
    </source>
</reference>
<dbReference type="EMBL" id="AB036881">
    <property type="protein sequence ID" value="BAB20441.1"/>
    <property type="molecule type" value="mRNA"/>
</dbReference>
<dbReference type="EMBL" id="AY091761">
    <property type="protein sequence ID" value="AAM22789.1"/>
    <property type="molecule type" value="mRNA"/>
</dbReference>
<dbReference type="EMBL" id="AF350324">
    <property type="protein sequence ID" value="AAK26430.1"/>
    <property type="molecule type" value="mRNA"/>
</dbReference>
<dbReference type="EMBL" id="AY293866">
    <property type="protein sequence ID" value="AAP50528.1"/>
    <property type="molecule type" value="Genomic_DNA"/>
</dbReference>
<dbReference type="PDB" id="1IOD">
    <property type="method" value="X-ray"/>
    <property type="resolution" value="2.30 A"/>
    <property type="chains" value="B=24-146"/>
</dbReference>
<dbReference type="PDB" id="1WT9">
    <property type="method" value="X-ray"/>
    <property type="resolution" value="2.01 A"/>
    <property type="chains" value="B=24-146"/>
</dbReference>
<dbReference type="PDB" id="1Y17">
    <property type="method" value="X-ray"/>
    <property type="resolution" value="2.40 A"/>
    <property type="chains" value="B=24-146"/>
</dbReference>
<dbReference type="PDBsum" id="1IOD"/>
<dbReference type="PDBsum" id="1WT9"/>
<dbReference type="PDBsum" id="1Y17"/>
<dbReference type="SMR" id="Q9DEF8"/>
<dbReference type="EvolutionaryTrace" id="Q9DEF8"/>
<dbReference type="GO" id="GO:0005576">
    <property type="term" value="C:extracellular region"/>
    <property type="evidence" value="ECO:0007669"/>
    <property type="project" value="UniProtKB-SubCell"/>
</dbReference>
<dbReference type="GO" id="GO:0046872">
    <property type="term" value="F:metal ion binding"/>
    <property type="evidence" value="ECO:0007669"/>
    <property type="project" value="UniProtKB-KW"/>
</dbReference>
<dbReference type="GO" id="GO:0090729">
    <property type="term" value="F:toxin activity"/>
    <property type="evidence" value="ECO:0007669"/>
    <property type="project" value="UniProtKB-KW"/>
</dbReference>
<dbReference type="FunFam" id="3.10.100.10:FF:000087">
    <property type="entry name" value="Snaclec rhodocetin subunit delta"/>
    <property type="match status" value="1"/>
</dbReference>
<dbReference type="Gene3D" id="3.10.100.10">
    <property type="entry name" value="Mannose-Binding Protein A, subunit A"/>
    <property type="match status" value="1"/>
</dbReference>
<dbReference type="InterPro" id="IPR001304">
    <property type="entry name" value="C-type_lectin-like"/>
</dbReference>
<dbReference type="InterPro" id="IPR016186">
    <property type="entry name" value="C-type_lectin-like/link_sf"/>
</dbReference>
<dbReference type="InterPro" id="IPR050111">
    <property type="entry name" value="C-type_lectin/snaclec_domain"/>
</dbReference>
<dbReference type="InterPro" id="IPR018378">
    <property type="entry name" value="C-type_lectin_CS"/>
</dbReference>
<dbReference type="InterPro" id="IPR016187">
    <property type="entry name" value="CTDL_fold"/>
</dbReference>
<dbReference type="PANTHER" id="PTHR22803">
    <property type="entry name" value="MANNOSE, PHOSPHOLIPASE, LECTIN RECEPTOR RELATED"/>
    <property type="match status" value="1"/>
</dbReference>
<dbReference type="Pfam" id="PF00059">
    <property type="entry name" value="Lectin_C"/>
    <property type="match status" value="1"/>
</dbReference>
<dbReference type="PRINTS" id="PR01504">
    <property type="entry name" value="PNCREATITSAP"/>
</dbReference>
<dbReference type="SMART" id="SM00034">
    <property type="entry name" value="CLECT"/>
    <property type="match status" value="1"/>
</dbReference>
<dbReference type="SUPFAM" id="SSF56436">
    <property type="entry name" value="C-type lectin-like"/>
    <property type="match status" value="1"/>
</dbReference>
<dbReference type="PROSITE" id="PS00615">
    <property type="entry name" value="C_TYPE_LECTIN_1"/>
    <property type="match status" value="1"/>
</dbReference>
<dbReference type="PROSITE" id="PS50041">
    <property type="entry name" value="C_TYPE_LECTIN_2"/>
    <property type="match status" value="1"/>
</dbReference>
<accession>Q9DEF8</accession>
<accession>Q7T2Y3</accession>
<accession>Q8JIV7</accession>
<accession>Q98SM5</accession>
<proteinExistence type="evidence at protein level"/>
<feature type="signal peptide" evidence="2">
    <location>
        <begin position="1"/>
        <end position="23"/>
    </location>
</feature>
<feature type="chain" id="PRO_5000049505" description="Snaclec anticoagulant protein subunit B">
    <location>
        <begin position="24"/>
        <end position="146"/>
    </location>
</feature>
<feature type="domain" description="C-type lectin" evidence="3">
    <location>
        <begin position="24"/>
        <end position="146"/>
    </location>
</feature>
<feature type="binding site">
    <location>
        <position position="64"/>
    </location>
    <ligand>
        <name>Ca(2+)</name>
        <dbReference type="ChEBI" id="CHEBI:29108"/>
    </ligand>
</feature>
<feature type="binding site">
    <location>
        <position position="66"/>
    </location>
    <ligand>
        <name>Ca(2+)</name>
        <dbReference type="ChEBI" id="CHEBI:29108"/>
    </ligand>
</feature>
<feature type="binding site">
    <location>
        <position position="70"/>
    </location>
    <ligand>
        <name>Ca(2+)</name>
        <dbReference type="ChEBI" id="CHEBI:29108"/>
    </ligand>
</feature>
<feature type="binding site">
    <location>
        <position position="143"/>
    </location>
    <ligand>
        <name>Ca(2+)</name>
        <dbReference type="ChEBI" id="CHEBI:29108"/>
    </ligand>
</feature>
<feature type="disulfide bond">
    <location>
        <begin position="25"/>
        <end position="36"/>
    </location>
</feature>
<feature type="disulfide bond">
    <location>
        <begin position="53"/>
        <end position="142"/>
    </location>
</feature>
<feature type="disulfide bond" description="Interchain (with C-102 in subunit A)">
    <location>
        <position position="98"/>
    </location>
</feature>
<feature type="disulfide bond">
    <location>
        <begin position="119"/>
        <end position="134"/>
    </location>
</feature>
<feature type="sequence conflict" description="In Ref. 2; AAM22789." evidence="6" ref="2">
    <original>L</original>
    <variation>V</variation>
    <location>
        <position position="14"/>
    </location>
</feature>
<feature type="sequence conflict" description="In Ref. 2; AAM22789." evidence="6" ref="2">
    <original>A</original>
    <variation>G</variation>
    <location>
        <position position="22"/>
    </location>
</feature>
<feature type="sequence conflict" description="In Ref. 3; AAK26430." evidence="6" ref="3">
    <original>A</original>
    <variation>M</variation>
    <location>
        <position position="23"/>
    </location>
</feature>
<feature type="sequence conflict" description="In Ref. 3; AAK26430/AAP50528." evidence="6" ref="3">
    <original>P</original>
    <variation>L</variation>
    <location>
        <position position="43"/>
    </location>
</feature>
<feature type="sequence conflict" description="In Ref. 2; AAM22789." evidence="6" ref="2">
    <original>S</original>
    <variation>G</variation>
    <location>
        <position position="60"/>
    </location>
</feature>
<feature type="sequence conflict" description="In Ref. 2; AAM22789 and 3; AAK26430/AAP50528." evidence="6" ref="2 3">
    <original>K</original>
    <variation>N</variation>
    <location>
        <position position="93"/>
    </location>
</feature>
<feature type="strand" evidence="8">
    <location>
        <begin position="29"/>
        <end position="32"/>
    </location>
</feature>
<feature type="strand" evidence="8">
    <location>
        <begin position="35"/>
        <end position="44"/>
    </location>
</feature>
<feature type="helix" evidence="8">
    <location>
        <begin position="46"/>
        <end position="54"/>
    </location>
</feature>
<feature type="helix" evidence="8">
    <location>
        <begin position="68"/>
        <end position="82"/>
    </location>
</feature>
<feature type="strand" evidence="8">
    <location>
        <begin position="86"/>
        <end position="88"/>
    </location>
</feature>
<feature type="turn" evidence="8">
    <location>
        <begin position="94"/>
        <end position="97"/>
    </location>
</feature>
<feature type="strand" evidence="8">
    <location>
        <begin position="100"/>
        <end position="102"/>
    </location>
</feature>
<feature type="strand" evidence="7">
    <location>
        <begin position="113"/>
        <end position="116"/>
    </location>
</feature>
<feature type="strand" evidence="8">
    <location>
        <begin position="118"/>
        <end position="123"/>
    </location>
</feature>
<feature type="strand" evidence="8">
    <location>
        <begin position="126"/>
        <end position="133"/>
    </location>
</feature>
<feature type="strand" evidence="8">
    <location>
        <begin position="138"/>
        <end position="145"/>
    </location>
</feature>
<protein>
    <recommendedName>
        <fullName>Snaclec anticoagulant protein subunit B</fullName>
        <shortName>AaACP-B</shortName>
    </recommendedName>
    <alternativeName>
        <fullName>ACF 1/2 B-chain</fullName>
    </alternativeName>
    <alternativeName>
        <fullName>Agkisasin-b</fullName>
    </alternativeName>
</protein>
<keyword id="KW-0002">3D-structure</keyword>
<keyword id="KW-1203">Blood coagulation cascade inhibiting toxin</keyword>
<keyword id="KW-0106">Calcium</keyword>
<keyword id="KW-1015">Disulfide bond</keyword>
<keyword id="KW-1199">Hemostasis impairing toxin</keyword>
<keyword id="KW-0479">Metal-binding</keyword>
<keyword id="KW-1201">Platelet aggregation inhibiting toxin</keyword>
<keyword id="KW-0964">Secreted</keyword>
<keyword id="KW-0732">Signal</keyword>
<keyword id="KW-0800">Toxin</keyword>
<evidence type="ECO:0000250" key="1"/>
<evidence type="ECO:0000255" key="2"/>
<evidence type="ECO:0000255" key="3">
    <source>
        <dbReference type="PROSITE-ProRule" id="PRU00040"/>
    </source>
</evidence>
<evidence type="ECO:0000269" key="4">
    <source>
    </source>
</evidence>
<evidence type="ECO:0000269" key="5">
    <source ref="5"/>
</evidence>
<evidence type="ECO:0000305" key="6"/>
<evidence type="ECO:0007829" key="7">
    <source>
        <dbReference type="PDB" id="1IOD"/>
    </source>
</evidence>
<evidence type="ECO:0007829" key="8">
    <source>
        <dbReference type="PDB" id="1WT9"/>
    </source>
</evidence>
<comment type="function">
    <text evidence="1">Anticoagulant protein which binds to the gamma-carboxyglutamic acid-domain regions of factors IX and factor X in the presence of calcium with a 1 to 1 stoichiometry. Also inhibits platelet aggregation by binding to platelet glycoprotein Ibalpha (GP1BA) and functioning as a blocker of vWF. Is devoid of hemorrhagic and lethal activities. Possesses antithrombotic and thrombolytic activities. Also hydrolyzes the Aalpha-chain of fibrinogen. Does not affect the Bbeta-chain and the gamma chain (By similarity).</text>
</comment>
<comment type="subunit">
    <text evidence="4 5">Heterodimer with subunit A of agkisacutacin or AaACP; disulfide-linked.</text>
</comment>
<comment type="subcellular location">
    <subcellularLocation>
        <location>Secreted</location>
    </subcellularLocation>
</comment>
<comment type="tissue specificity">
    <text>Expressed by the venom gland.</text>
</comment>
<comment type="similarity">
    <text evidence="6">Belongs to the snaclec family.</text>
</comment>